<dbReference type="EMBL" id="BX284603">
    <property type="protein sequence ID" value="CCD70935.1"/>
    <property type="molecule type" value="Genomic_DNA"/>
</dbReference>
<dbReference type="PIR" id="T33628">
    <property type="entry name" value="T33628"/>
</dbReference>
<dbReference type="RefSeq" id="NP_497173.1">
    <property type="nucleotide sequence ID" value="NM_064772.7"/>
</dbReference>
<dbReference type="SMR" id="Q9TZ70"/>
<dbReference type="FunCoup" id="Q9TZ70">
    <property type="interactions" value="1577"/>
</dbReference>
<dbReference type="IntAct" id="Q9TZ70">
    <property type="interactions" value="1"/>
</dbReference>
<dbReference type="STRING" id="6239.F40G9.11.1"/>
<dbReference type="PaxDb" id="6239-F40G9.11"/>
<dbReference type="EnsemblMetazoa" id="F40G9.11.1">
    <property type="protein sequence ID" value="F40G9.11.1"/>
    <property type="gene ID" value="WBGene00003510"/>
</dbReference>
<dbReference type="GeneID" id="175184"/>
<dbReference type="KEGG" id="cel:CELE_F40G9.11"/>
<dbReference type="UCSC" id="F40G9.11">
    <property type="organism name" value="c. elegans"/>
</dbReference>
<dbReference type="AGR" id="WB:WBGene00003510"/>
<dbReference type="CTD" id="175184"/>
<dbReference type="WormBase" id="F40G9.11">
    <property type="protein sequence ID" value="CE19858"/>
    <property type="gene ID" value="WBGene00003510"/>
    <property type="gene designation" value="mxl-2"/>
</dbReference>
<dbReference type="eggNOG" id="KOG1319">
    <property type="taxonomic scope" value="Eukaryota"/>
</dbReference>
<dbReference type="HOGENOM" id="CLU_115095_0_0_1"/>
<dbReference type="InParanoid" id="Q9TZ70"/>
<dbReference type="OMA" id="SEYEQMA"/>
<dbReference type="OrthoDB" id="5778525at2759"/>
<dbReference type="PhylomeDB" id="Q9TZ70"/>
<dbReference type="PRO" id="PR:Q9TZ70"/>
<dbReference type="Proteomes" id="UP000001940">
    <property type="component" value="Chromosome III"/>
</dbReference>
<dbReference type="Bgee" id="WBGene00003510">
    <property type="expression patterns" value="Expressed in embryo and 4 other cell types or tissues"/>
</dbReference>
<dbReference type="GO" id="GO:0005737">
    <property type="term" value="C:cytoplasm"/>
    <property type="evidence" value="ECO:0000314"/>
    <property type="project" value="WormBase"/>
</dbReference>
<dbReference type="GO" id="GO:0005739">
    <property type="term" value="C:mitochondrion"/>
    <property type="evidence" value="ECO:0007669"/>
    <property type="project" value="UniProtKB-SubCell"/>
</dbReference>
<dbReference type="GO" id="GO:0005634">
    <property type="term" value="C:nucleus"/>
    <property type="evidence" value="ECO:0000314"/>
    <property type="project" value="WormBase"/>
</dbReference>
<dbReference type="GO" id="GO:0000981">
    <property type="term" value="F:DNA-binding transcription factor activity, RNA polymerase II-specific"/>
    <property type="evidence" value="ECO:0000318"/>
    <property type="project" value="GO_Central"/>
</dbReference>
<dbReference type="GO" id="GO:0046983">
    <property type="term" value="F:protein dimerization activity"/>
    <property type="evidence" value="ECO:0007669"/>
    <property type="project" value="InterPro"/>
</dbReference>
<dbReference type="GO" id="GO:0000978">
    <property type="term" value="F:RNA polymerase II cis-regulatory region sequence-specific DNA binding"/>
    <property type="evidence" value="ECO:0000318"/>
    <property type="project" value="GO_Central"/>
</dbReference>
<dbReference type="GO" id="GO:0008340">
    <property type="term" value="P:determination of adult lifespan"/>
    <property type="evidence" value="ECO:0000316"/>
    <property type="project" value="WormBase"/>
</dbReference>
<dbReference type="GO" id="GO:0010629">
    <property type="term" value="P:negative regulation of gene expression"/>
    <property type="evidence" value="ECO:0000316"/>
    <property type="project" value="WormBase"/>
</dbReference>
<dbReference type="GO" id="GO:0006357">
    <property type="term" value="P:regulation of transcription by RNA polymerase II"/>
    <property type="evidence" value="ECO:0000318"/>
    <property type="project" value="GO_Central"/>
</dbReference>
<dbReference type="CDD" id="cd11404">
    <property type="entry name" value="bHLHzip_Mlx_like"/>
    <property type="match status" value="1"/>
</dbReference>
<dbReference type="FunFam" id="4.10.280.10:FF:000136">
    <property type="entry name" value="CBN-MXL-2 protein"/>
    <property type="match status" value="1"/>
</dbReference>
<dbReference type="Gene3D" id="4.10.280.10">
    <property type="entry name" value="Helix-loop-helix DNA-binding domain"/>
    <property type="match status" value="1"/>
</dbReference>
<dbReference type="InterPro" id="IPR011598">
    <property type="entry name" value="bHLH_dom"/>
</dbReference>
<dbReference type="InterPro" id="IPR036638">
    <property type="entry name" value="HLH_DNA-bd_sf"/>
</dbReference>
<dbReference type="InterPro" id="IPR052207">
    <property type="entry name" value="Max-like/E-box_TFs"/>
</dbReference>
<dbReference type="PANTHER" id="PTHR15741">
    <property type="entry name" value="BASIC HELIX-LOOP-HELIX ZIP TRANSCRIPTION FACTOR"/>
    <property type="match status" value="1"/>
</dbReference>
<dbReference type="PANTHER" id="PTHR15741:SF25">
    <property type="entry name" value="MAX-LIKE PROTEIN X"/>
    <property type="match status" value="1"/>
</dbReference>
<dbReference type="Pfam" id="PF00010">
    <property type="entry name" value="HLH"/>
    <property type="match status" value="1"/>
</dbReference>
<dbReference type="SMART" id="SM00353">
    <property type="entry name" value="HLH"/>
    <property type="match status" value="1"/>
</dbReference>
<dbReference type="SUPFAM" id="SSF47459">
    <property type="entry name" value="HLH, helix-loop-helix DNA-binding domain"/>
    <property type="match status" value="1"/>
</dbReference>
<dbReference type="PROSITE" id="PS50888">
    <property type="entry name" value="BHLH"/>
    <property type="match status" value="1"/>
</dbReference>
<proteinExistence type="evidence at protein level"/>
<feature type="chain" id="PRO_0000453379" description="Max-like protein homolog 2">
    <location>
        <begin position="1"/>
        <end position="205"/>
    </location>
</feature>
<feature type="domain" description="bHLH" evidence="2">
    <location>
        <begin position="47"/>
        <end position="101"/>
    </location>
</feature>
<feature type="region of interest" description="Disordered" evidence="3">
    <location>
        <begin position="1"/>
        <end position="58"/>
    </location>
</feature>
<feature type="region of interest" description="Basic motif" evidence="2">
    <location>
        <begin position="47"/>
        <end position="60"/>
    </location>
</feature>
<feature type="region of interest" description="Helix-loop-helix motif" evidence="2">
    <location>
        <begin position="61"/>
        <end position="101"/>
    </location>
</feature>
<feature type="coiled-coil region" evidence="1">
    <location>
        <begin position="98"/>
        <end position="132"/>
    </location>
</feature>
<feature type="compositionally biased region" description="Low complexity" evidence="3">
    <location>
        <begin position="1"/>
        <end position="12"/>
    </location>
</feature>
<feature type="compositionally biased region" description="Low complexity" evidence="3">
    <location>
        <begin position="26"/>
        <end position="40"/>
    </location>
</feature>
<feature type="compositionally biased region" description="Basic and acidic residues" evidence="3">
    <location>
        <begin position="45"/>
        <end position="58"/>
    </location>
</feature>
<feature type="mutagenesis site" description="In tm1516; significant anterior displacement of the first sensory ray of the male tail. Anterior displacement of ray 1 is enhanced on a bar-1 mutant background. Reduced lifespan, further reduced on a daf-2 mutant background. Reduced N.parisii spore levels, further reduced on an mdl-1 mutant background." evidence="4 5 7">
    <location>
        <begin position="65"/>
        <end position="205"/>
    </location>
</feature>
<gene>
    <name evidence="10" type="primary">mxl-2</name>
    <name evidence="10" type="ORF">F40G9.11</name>
</gene>
<sequence length="205" mass="22060">MSRSRSAAASSSQKPDDMDLMSPDGSASSPSAPNTPATNSGGFSSDRKKATHLRCERQRREAINSGYSDLKDLIPQTTTSLGCKTTNAAILFRACDFMSQLKTDISDADKQLAQLNAQAAALEMIASEYEQMASSVPDAGQSTIQVKMLQLLLDDCFTSFSSQVDFTTYATITRTLLSWVESLAPNAEPFKSTAGKMVTMPFTSP</sequence>
<name>MXL2_CAEEL</name>
<accession>Q9TZ70</accession>
<comment type="function">
    <text evidence="4 5 6 7">Transcription factor (PubMed:17826759). Binds to the E box motif 5'-CACGTG-3', probably in a heterodimeric complex with mml-1 (PubMed:17826759). Involved in modulating longevity in response to TOR signaling, dietary restriction, the decline in protein homeostasis associated with normal aging, germline signaling and the insulin-like signaling pathway (PubMed:24699255, PubMed:27001890). Plays a role in autophagy (PubMed:27001890). Involved in regulating migration of the ray 1 precursor cells in the male tail, acting in concert with Wnt and semaphorin signaling pathways (PubMed:17826759). Regulates transcription of genes encoding extracellular matrix (ECM) components which may contribute to the substratum required for migration of the neighboring ray 1 precursor cells (PubMed:17826759). Required for resistance to oxidative stress (PubMed:24699255). Involved in promoting infection by the microsporidian pathogen N.parisii, probably acting independently of its canonical partner, mml-1 (PubMed:27402359).</text>
</comment>
<comment type="interaction">
    <interactant intactId="EBI-2408874">
        <id>Q9TZ70</id>
    </interactant>
    <interactant intactId="EBI-2408887">
        <id>P41846</id>
        <label>mml-1</label>
    </interactant>
    <organismsDiffer>false</organismsDiffer>
    <experiments>3</experiments>
</comment>
<comment type="subcellular location">
    <subcellularLocation>
        <location evidence="2 4">Nucleus</location>
    </subcellularLocation>
    <subcellularLocation>
        <location evidence="6">Cytoplasm</location>
    </subcellularLocation>
    <subcellularLocation>
        <location evidence="6">Mitochondrion</location>
    </subcellularLocation>
    <text evidence="6">Only sporadic mitochondrial localization.</text>
</comment>
<comment type="tissue specificity">
    <text evidence="6">Widely expressed.</text>
</comment>
<comment type="developmental stage">
    <text evidence="4">Expressed in non-migratory, syncytial epidermis at larval stage L1.</text>
</comment>
<comment type="disruption phenotype">
    <text evidence="5 7">RNAi-mediated knockdown reduces lifespan and is further reduced on a daf-2 mutant background (PubMed:24699255). RNAi-mediated knockdown causes premature onset of polyglutamine-mediated paralysis (PubMed:24699255). RNAi-mediated knockdown reduces spore levels of the microsporidian pathogen N.parisii during infection, further reduced on an mdl-1 mutant background (PubMed:27402359).</text>
</comment>
<reference evidence="9" key="1">
    <citation type="journal article" date="1998" name="Science">
        <title>Genome sequence of the nematode C. elegans: a platform for investigating biology.</title>
        <authorList>
            <consortium name="The C. elegans sequencing consortium"/>
        </authorList>
    </citation>
    <scope>NUCLEOTIDE SEQUENCE [LARGE SCALE GENOMIC DNA]</scope>
    <source>
        <strain evidence="9">Bristol N2</strain>
    </source>
</reference>
<reference evidence="8" key="2">
    <citation type="journal article" date="2007" name="Dev. Biol.">
        <title>A C. elegans Myc-like network cooperates with semaphorin and Wnt signaling pathways to control cell migration.</title>
        <authorList>
            <person name="Pickett C.L."/>
            <person name="Breen K.T."/>
            <person name="Ayer D.E."/>
        </authorList>
    </citation>
    <scope>FUNCTION</scope>
    <scope>SUBCELLULAR LOCATION</scope>
    <scope>DEVELOPMENTAL STAGE</scope>
    <scope>MUTAGENESIS OF 65-SER--PRO-205</scope>
</reference>
<reference evidence="8" key="3">
    <citation type="journal article" date="2014" name="PLoS Genet.">
        <title>The Caenorhabditis elegans Myc-Mondo/Mad complexes integrate diverse longevity signals.</title>
        <authorList>
            <person name="Johnson D.W."/>
            <person name="Llop J.R."/>
            <person name="Farrell S.F."/>
            <person name="Yuan J."/>
            <person name="Stolzenburg L.R."/>
            <person name="Samuelson A.V."/>
        </authorList>
    </citation>
    <scope>FUNCTION</scope>
    <scope>DISRUPTION PHENOTYPE</scope>
    <scope>MUTAGENESIS OF 65-SER--PRO-205</scope>
</reference>
<reference evidence="8" key="4">
    <citation type="journal article" date="2016" name="G3 (Bethesda)">
        <title>Microsporidia Intracellular Development Relies on Myc Interaction Network Transcription Factors in the Host.</title>
        <authorList>
            <person name="Botts M.R."/>
            <person name="Cohen L.B."/>
            <person name="Probert C.S."/>
            <person name="Wu F."/>
            <person name="Troemel E.R."/>
        </authorList>
    </citation>
    <scope>FUNCTION</scope>
    <scope>DISRUPTION PHENOTYPE</scope>
    <scope>MUTAGENESIS OF 65-SER--PRO-205</scope>
</reference>
<reference evidence="8" key="5">
    <citation type="journal article" date="2016" name="Nat. Commun.">
        <title>Mondo complexes regulate TFEB via TOR inhibition to promote longevity in response to gonadal signals.</title>
        <authorList>
            <person name="Nakamura S."/>
            <person name="Karalay O."/>
            <person name="Jaeger P.S."/>
            <person name="Horikawa M."/>
            <person name="Klein C."/>
            <person name="Nakamura K."/>
            <person name="Latza C."/>
            <person name="Templer S.E."/>
            <person name="Dieterich C."/>
            <person name="Antebi A."/>
        </authorList>
    </citation>
    <scope>FUNCTION</scope>
    <scope>SUBCELLULAR LOCATION</scope>
    <scope>TISSUE SPECIFICITY</scope>
</reference>
<evidence type="ECO:0000255" key="1"/>
<evidence type="ECO:0000255" key="2">
    <source>
        <dbReference type="PROSITE-ProRule" id="PRU00981"/>
    </source>
</evidence>
<evidence type="ECO:0000256" key="3">
    <source>
        <dbReference type="SAM" id="MobiDB-lite"/>
    </source>
</evidence>
<evidence type="ECO:0000269" key="4">
    <source>
    </source>
</evidence>
<evidence type="ECO:0000269" key="5">
    <source>
    </source>
</evidence>
<evidence type="ECO:0000269" key="6">
    <source>
    </source>
</evidence>
<evidence type="ECO:0000269" key="7">
    <source>
    </source>
</evidence>
<evidence type="ECO:0000305" key="8"/>
<evidence type="ECO:0000312" key="9">
    <source>
        <dbReference type="Proteomes" id="UP000001940"/>
    </source>
</evidence>
<evidence type="ECO:0000312" key="10">
    <source>
        <dbReference type="WormBase" id="F40G9.11"/>
    </source>
</evidence>
<protein>
    <recommendedName>
        <fullName evidence="10">Max-like protein homolog 2</fullName>
    </recommendedName>
</protein>
<organism evidence="9">
    <name type="scientific">Caenorhabditis elegans</name>
    <dbReference type="NCBI Taxonomy" id="6239"/>
    <lineage>
        <taxon>Eukaryota</taxon>
        <taxon>Metazoa</taxon>
        <taxon>Ecdysozoa</taxon>
        <taxon>Nematoda</taxon>
        <taxon>Chromadorea</taxon>
        <taxon>Rhabditida</taxon>
        <taxon>Rhabditina</taxon>
        <taxon>Rhabditomorpha</taxon>
        <taxon>Rhabditoidea</taxon>
        <taxon>Rhabditidae</taxon>
        <taxon>Peloderinae</taxon>
        <taxon>Caenorhabditis</taxon>
    </lineage>
</organism>
<keyword id="KW-0175">Coiled coil</keyword>
<keyword id="KW-0963">Cytoplasm</keyword>
<keyword id="KW-0238">DNA-binding</keyword>
<keyword id="KW-0496">Mitochondrion</keyword>
<keyword id="KW-0539">Nucleus</keyword>
<keyword id="KW-1185">Reference proteome</keyword>
<keyword id="KW-0804">Transcription</keyword>
<keyword id="KW-0805">Transcription regulation</keyword>